<sequence length="1071" mass="124200">MKLIYTEMSYSMTEILVNEARKAADQGYRVFYIAPNSLSFEKEREVLTLLPERGTFSIIVTRFVQMSRYFTVESSPSKQHLDDTTLAMIFYRALMQLKPEDLPSYGRLQNNSVFIEQLVELYKELKNAQLSVHDLTGLDHPQKQEDLIKIIELAETIMIQQDYNQDSPLQSFARAIKLGLLNNQLSKTVVVIDGFSRFSAEEDYLLSLLNNNCQEVIIGSYVSQKAYQKSFIKGNIYEASLHFLQDLAQKYHIKPVFATSNQVFKPAFSRLTQLFEATHDFSQVDWQLQKNDLDHFSLWQCHHQKEEIEHVAKSIRQKLYEGYRYKDILVLLGDMDAYQLQIGPIFDKFEIPYYLGKAEPMAAHPLVQFIESLERSQRYNWRREDILNMLKSGLFGCFDDSDIDRFEEYTQFADIKGFTKFSKPFTINSSRQYPLDFLNEMRQDIVLPLQELFKSQKQLGASLVDKLILFLKKIRLAENMQGLAQSQLEVEKNEEVWKRFTDILTSFHHIFGQEKLRLSDCLALIKTGMKSAQYRVVPATLDVVTIKSYDLVQPHSKPFVYAIGLTQSHFPKQIHHSGLLSDQERARINEIRNYRHFDIASAENSKKNHQTALSLFNAATKELVLSVPTVINETFDDLSPYLKELINFGLPLLDKGKNYLSYDNSDIGNYKALLSQIIAINRQDLIEMSDQDKMFWTVVLRYLRKQLRKQQLELPTSDYRLSTKPLSKEVIEVCFPKGIPLKLSATALTVFYNNQYNYFLKYVLNLNKTESIHPDSRIHGQYLHRVFERLMKDHTQEPFDNKLKQAIYHTNQESFFQQVYQDNAEAEYSLAILEDIVRSTAPILQLNQNIKVIDQEKNFHLDMGNEILVHGIIDRIDQLSDGSLGVVDYKSSANQFDIGTFYNGLSPQLVTYLAALKQIAPHDINQLFGAMYLHLQDPKLDLVTFKQIDNTLVESIYKALTYKGIFSEVEKEHLSTGAYQTKNALYSNDELETLLNYNKYLYLKAVKHIKKGHFLINPYTSDGKTVQGDQLKAITRFEADLDMAQARRLVTLPAKEKKECFLTLMRKESHL</sequence>
<gene>
    <name evidence="1" type="primary">rexB</name>
    <name type="ordered locus">spyM18_0835</name>
</gene>
<dbReference type="EC" id="3.1.-.-" evidence="1"/>
<dbReference type="EMBL" id="AE009949">
    <property type="protein sequence ID" value="AAL97495.1"/>
    <property type="molecule type" value="Genomic_DNA"/>
</dbReference>
<dbReference type="RefSeq" id="WP_011017622.1">
    <property type="nucleotide sequence ID" value="NC_003485.1"/>
</dbReference>
<dbReference type="SMR" id="Q8P1J3"/>
<dbReference type="KEGG" id="spm:spyM18_0835"/>
<dbReference type="HOGENOM" id="CLU_007838_1_0_9"/>
<dbReference type="GO" id="GO:0008409">
    <property type="term" value="F:5'-3' exonuclease activity"/>
    <property type="evidence" value="ECO:0007669"/>
    <property type="project" value="UniProtKB-UniRule"/>
</dbReference>
<dbReference type="GO" id="GO:0005524">
    <property type="term" value="F:ATP binding"/>
    <property type="evidence" value="ECO:0007669"/>
    <property type="project" value="UniProtKB-UniRule"/>
</dbReference>
<dbReference type="GO" id="GO:0003690">
    <property type="term" value="F:double-stranded DNA binding"/>
    <property type="evidence" value="ECO:0007669"/>
    <property type="project" value="UniProtKB-UniRule"/>
</dbReference>
<dbReference type="GO" id="GO:0004386">
    <property type="term" value="F:helicase activity"/>
    <property type="evidence" value="ECO:0007669"/>
    <property type="project" value="UniProtKB-KW"/>
</dbReference>
<dbReference type="GO" id="GO:0016817">
    <property type="term" value="F:hydrolase activity, acting on acid anhydrides"/>
    <property type="evidence" value="ECO:0007669"/>
    <property type="project" value="InterPro"/>
</dbReference>
<dbReference type="GO" id="GO:0000724">
    <property type="term" value="P:double-strand break repair via homologous recombination"/>
    <property type="evidence" value="ECO:0007669"/>
    <property type="project" value="UniProtKB-UniRule"/>
</dbReference>
<dbReference type="Gene3D" id="3.90.320.10">
    <property type="match status" value="1"/>
</dbReference>
<dbReference type="Gene3D" id="3.40.50.300">
    <property type="entry name" value="P-loop containing nucleotide triphosphate hydrolases"/>
    <property type="match status" value="3"/>
</dbReference>
<dbReference type="HAMAP" id="MF_01453">
    <property type="entry name" value="AddB_type2"/>
    <property type="match status" value="1"/>
</dbReference>
<dbReference type="InterPro" id="IPR049035">
    <property type="entry name" value="ADDB_N"/>
</dbReference>
<dbReference type="InterPro" id="IPR014141">
    <property type="entry name" value="DNA_helicase_suRexB"/>
</dbReference>
<dbReference type="InterPro" id="IPR027417">
    <property type="entry name" value="P-loop_NTPase"/>
</dbReference>
<dbReference type="InterPro" id="IPR011604">
    <property type="entry name" value="PDDEXK-like_dom_sf"/>
</dbReference>
<dbReference type="InterPro" id="IPR038726">
    <property type="entry name" value="PDDEXK_AddAB-type"/>
</dbReference>
<dbReference type="InterPro" id="IPR011335">
    <property type="entry name" value="Restrct_endonuc-II-like"/>
</dbReference>
<dbReference type="NCBIfam" id="TIGR02774">
    <property type="entry name" value="rexB_recomb"/>
    <property type="match status" value="1"/>
</dbReference>
<dbReference type="PANTHER" id="PTHR30591">
    <property type="entry name" value="RECBCD ENZYME SUBUNIT RECC"/>
    <property type="match status" value="1"/>
</dbReference>
<dbReference type="PANTHER" id="PTHR30591:SF1">
    <property type="entry name" value="RECBCD ENZYME SUBUNIT RECC"/>
    <property type="match status" value="1"/>
</dbReference>
<dbReference type="Pfam" id="PF21445">
    <property type="entry name" value="ADDB_N"/>
    <property type="match status" value="1"/>
</dbReference>
<dbReference type="Pfam" id="PF12705">
    <property type="entry name" value="PDDEXK_1"/>
    <property type="match status" value="1"/>
</dbReference>
<dbReference type="SUPFAM" id="SSF52540">
    <property type="entry name" value="P-loop containing nucleoside triphosphate hydrolases"/>
    <property type="match status" value="1"/>
</dbReference>
<dbReference type="SUPFAM" id="SSF52980">
    <property type="entry name" value="Restriction endonuclease-like"/>
    <property type="match status" value="1"/>
</dbReference>
<keyword id="KW-0067">ATP-binding</keyword>
<keyword id="KW-0227">DNA damage</keyword>
<keyword id="KW-0234">DNA repair</keyword>
<keyword id="KW-0238">DNA-binding</keyword>
<keyword id="KW-0269">Exonuclease</keyword>
<keyword id="KW-0347">Helicase</keyword>
<keyword id="KW-0378">Hydrolase</keyword>
<keyword id="KW-0540">Nuclease</keyword>
<keyword id="KW-0547">Nucleotide-binding</keyword>
<comment type="function">
    <text evidence="1">The heterodimer acts as both an ATP-dependent DNA helicase and an ATP-dependent, dual-direction single-stranded exonuclease. Recognizes the chi site generating a DNA molecule suitable for the initiation of homologous recombination. This subunit has 5' -&gt; 3' nuclease activity but not helicase activity.</text>
</comment>
<comment type="cofactor">
    <cofactor evidence="1">
        <name>Mg(2+)</name>
        <dbReference type="ChEBI" id="CHEBI:18420"/>
    </cofactor>
</comment>
<comment type="subunit">
    <text evidence="1">Heterodimer of AddA and RexB.</text>
</comment>
<comment type="miscellaneous">
    <text evidence="1">Despite having helicase-like domains, this subunit does not have helicase activity.</text>
</comment>
<comment type="similarity">
    <text evidence="1">Belongs to the helicase family. AddB/RexB type 2 subfamily.</text>
</comment>
<evidence type="ECO:0000255" key="1">
    <source>
        <dbReference type="HAMAP-Rule" id="MF_01453"/>
    </source>
</evidence>
<proteinExistence type="inferred from homology"/>
<protein>
    <recommendedName>
        <fullName evidence="1">ATP-dependent helicase/deoxyribonuclease subunit B</fullName>
        <ecNumber evidence="1">3.1.-.-</ecNumber>
    </recommendedName>
    <alternativeName>
        <fullName evidence="1">ATP-dependent helicase/nuclease subunit RexB</fullName>
    </alternativeName>
</protein>
<accession>Q8P1J3</accession>
<organism>
    <name type="scientific">Streptococcus pyogenes serotype M18 (strain MGAS8232)</name>
    <dbReference type="NCBI Taxonomy" id="186103"/>
    <lineage>
        <taxon>Bacteria</taxon>
        <taxon>Bacillati</taxon>
        <taxon>Bacillota</taxon>
        <taxon>Bacilli</taxon>
        <taxon>Lactobacillales</taxon>
        <taxon>Streptococcaceae</taxon>
        <taxon>Streptococcus</taxon>
    </lineage>
</organism>
<name>ADDB_STRP8</name>
<feature type="chain" id="PRO_0000379404" description="ATP-dependent helicase/deoxyribonuclease subunit B">
    <location>
        <begin position="1"/>
        <end position="1071"/>
    </location>
</feature>
<reference key="1">
    <citation type="journal article" date="2002" name="Proc. Natl. Acad. Sci. U.S.A.">
        <title>Genome sequence and comparative microarray analysis of serotype M18 group A Streptococcus strains associated with acute rheumatic fever outbreaks.</title>
        <authorList>
            <person name="Smoot J.C."/>
            <person name="Barbian K.D."/>
            <person name="Van Gompel J.J."/>
            <person name="Smoot L.M."/>
            <person name="Chaussee M.S."/>
            <person name="Sylva G.L."/>
            <person name="Sturdevant D.E."/>
            <person name="Ricklefs S.M."/>
            <person name="Porcella S.F."/>
            <person name="Parkins L.D."/>
            <person name="Beres S.B."/>
            <person name="Campbell D.S."/>
            <person name="Smith T.M."/>
            <person name="Zhang Q."/>
            <person name="Kapur V."/>
            <person name="Daly J.A."/>
            <person name="Veasy L.G."/>
            <person name="Musser J.M."/>
        </authorList>
    </citation>
    <scope>NUCLEOTIDE SEQUENCE [LARGE SCALE GENOMIC DNA]</scope>
    <source>
        <strain>MGAS8232</strain>
    </source>
</reference>